<protein>
    <recommendedName>
        <fullName evidence="1">Dephospho-CoA kinase</fullName>
        <ecNumber evidence="1">2.7.1.24</ecNumber>
    </recommendedName>
    <alternativeName>
        <fullName evidence="1">Dephosphocoenzyme A kinase</fullName>
    </alternativeName>
</protein>
<feature type="chain" id="PRO_0000172902" description="Dephospho-CoA kinase">
    <location>
        <begin position="1"/>
        <end position="200"/>
    </location>
</feature>
<feature type="domain" description="DPCK" evidence="1">
    <location>
        <begin position="4"/>
        <end position="200"/>
    </location>
</feature>
<feature type="binding site" evidence="1">
    <location>
        <begin position="12"/>
        <end position="17"/>
    </location>
    <ligand>
        <name>ATP</name>
        <dbReference type="ChEBI" id="CHEBI:30616"/>
    </ligand>
</feature>
<gene>
    <name evidence="1" type="primary">coaE</name>
    <name type="ordered locus">BCE_4715</name>
</gene>
<name>COAE_BACC1</name>
<dbReference type="EC" id="2.7.1.24" evidence="1"/>
<dbReference type="EMBL" id="AE017194">
    <property type="protein sequence ID" value="AAS43616.1"/>
    <property type="molecule type" value="Genomic_DNA"/>
</dbReference>
<dbReference type="SMR" id="Q72ZF3"/>
<dbReference type="KEGG" id="bca:BCE_4715"/>
<dbReference type="HOGENOM" id="CLU_057180_0_0_9"/>
<dbReference type="UniPathway" id="UPA00241">
    <property type="reaction ID" value="UER00356"/>
</dbReference>
<dbReference type="Proteomes" id="UP000002527">
    <property type="component" value="Chromosome"/>
</dbReference>
<dbReference type="GO" id="GO:0005737">
    <property type="term" value="C:cytoplasm"/>
    <property type="evidence" value="ECO:0007669"/>
    <property type="project" value="UniProtKB-SubCell"/>
</dbReference>
<dbReference type="GO" id="GO:0005524">
    <property type="term" value="F:ATP binding"/>
    <property type="evidence" value="ECO:0007669"/>
    <property type="project" value="UniProtKB-UniRule"/>
</dbReference>
<dbReference type="GO" id="GO:0004140">
    <property type="term" value="F:dephospho-CoA kinase activity"/>
    <property type="evidence" value="ECO:0007669"/>
    <property type="project" value="UniProtKB-UniRule"/>
</dbReference>
<dbReference type="GO" id="GO:0015937">
    <property type="term" value="P:coenzyme A biosynthetic process"/>
    <property type="evidence" value="ECO:0007669"/>
    <property type="project" value="UniProtKB-UniRule"/>
</dbReference>
<dbReference type="CDD" id="cd02022">
    <property type="entry name" value="DPCK"/>
    <property type="match status" value="1"/>
</dbReference>
<dbReference type="FunFam" id="3.40.50.300:FF:000485">
    <property type="entry name" value="Dephospho-CoA kinase CAB5"/>
    <property type="match status" value="1"/>
</dbReference>
<dbReference type="Gene3D" id="3.40.50.300">
    <property type="entry name" value="P-loop containing nucleotide triphosphate hydrolases"/>
    <property type="match status" value="1"/>
</dbReference>
<dbReference type="HAMAP" id="MF_00376">
    <property type="entry name" value="Dephospho_CoA_kinase"/>
    <property type="match status" value="1"/>
</dbReference>
<dbReference type="InterPro" id="IPR001977">
    <property type="entry name" value="Depp_CoAkinase"/>
</dbReference>
<dbReference type="InterPro" id="IPR027417">
    <property type="entry name" value="P-loop_NTPase"/>
</dbReference>
<dbReference type="NCBIfam" id="TIGR00152">
    <property type="entry name" value="dephospho-CoA kinase"/>
    <property type="match status" value="1"/>
</dbReference>
<dbReference type="PANTHER" id="PTHR10695:SF46">
    <property type="entry name" value="BIFUNCTIONAL COENZYME A SYNTHASE-RELATED"/>
    <property type="match status" value="1"/>
</dbReference>
<dbReference type="PANTHER" id="PTHR10695">
    <property type="entry name" value="DEPHOSPHO-COA KINASE-RELATED"/>
    <property type="match status" value="1"/>
</dbReference>
<dbReference type="Pfam" id="PF01121">
    <property type="entry name" value="CoaE"/>
    <property type="match status" value="1"/>
</dbReference>
<dbReference type="SUPFAM" id="SSF52540">
    <property type="entry name" value="P-loop containing nucleoside triphosphate hydrolases"/>
    <property type="match status" value="1"/>
</dbReference>
<dbReference type="PROSITE" id="PS51219">
    <property type="entry name" value="DPCK"/>
    <property type="match status" value="1"/>
</dbReference>
<proteinExistence type="inferred from homology"/>
<comment type="function">
    <text evidence="1">Catalyzes the phosphorylation of the 3'-hydroxyl group of dephosphocoenzyme A to form coenzyme A.</text>
</comment>
<comment type="catalytic activity">
    <reaction evidence="1">
        <text>3'-dephospho-CoA + ATP = ADP + CoA + H(+)</text>
        <dbReference type="Rhea" id="RHEA:18245"/>
        <dbReference type="ChEBI" id="CHEBI:15378"/>
        <dbReference type="ChEBI" id="CHEBI:30616"/>
        <dbReference type="ChEBI" id="CHEBI:57287"/>
        <dbReference type="ChEBI" id="CHEBI:57328"/>
        <dbReference type="ChEBI" id="CHEBI:456216"/>
        <dbReference type="EC" id="2.7.1.24"/>
    </reaction>
</comment>
<comment type="pathway">
    <text evidence="1">Cofactor biosynthesis; coenzyme A biosynthesis; CoA from (R)-pantothenate: step 5/5.</text>
</comment>
<comment type="subcellular location">
    <subcellularLocation>
        <location evidence="1">Cytoplasm</location>
    </subcellularLocation>
</comment>
<comment type="similarity">
    <text evidence="1">Belongs to the CoaE family.</text>
</comment>
<reference key="1">
    <citation type="journal article" date="2004" name="Nucleic Acids Res.">
        <title>The genome sequence of Bacillus cereus ATCC 10987 reveals metabolic adaptations and a large plasmid related to Bacillus anthracis pXO1.</title>
        <authorList>
            <person name="Rasko D.A."/>
            <person name="Ravel J."/>
            <person name="Oekstad O.A."/>
            <person name="Helgason E."/>
            <person name="Cer R.Z."/>
            <person name="Jiang L."/>
            <person name="Shores K.A."/>
            <person name="Fouts D.E."/>
            <person name="Tourasse N.J."/>
            <person name="Angiuoli S.V."/>
            <person name="Kolonay J.F."/>
            <person name="Nelson W.C."/>
            <person name="Kolstoe A.-B."/>
            <person name="Fraser C.M."/>
            <person name="Read T.D."/>
        </authorList>
    </citation>
    <scope>NUCLEOTIDE SEQUENCE [LARGE SCALE GENOMIC DNA]</scope>
    <source>
        <strain>ATCC 10987 / NRS 248</strain>
    </source>
</reference>
<sequence length="200" mass="22753">MTVVIGLTGGIASGKSTVSQMFRELSIPVIDADIIAREVVERGKPAYNKIVEVFGTEVLQEDGELDRPKLGSVVFYNEEKRLQLNKIVHPAVREEMNRQKEMYIKEGMQAVVLDIPLLFESKLTSLVDRVLVVAVKPRTQLERLMKRNDFSEEEATARIQSQMPLEEKVKRADEVINNDGTIMETKTQLEVILKNWNIID</sequence>
<accession>Q72ZF3</accession>
<organism>
    <name type="scientific">Bacillus cereus (strain ATCC 10987 / NRS 248)</name>
    <dbReference type="NCBI Taxonomy" id="222523"/>
    <lineage>
        <taxon>Bacteria</taxon>
        <taxon>Bacillati</taxon>
        <taxon>Bacillota</taxon>
        <taxon>Bacilli</taxon>
        <taxon>Bacillales</taxon>
        <taxon>Bacillaceae</taxon>
        <taxon>Bacillus</taxon>
        <taxon>Bacillus cereus group</taxon>
    </lineage>
</organism>
<evidence type="ECO:0000255" key="1">
    <source>
        <dbReference type="HAMAP-Rule" id="MF_00376"/>
    </source>
</evidence>
<keyword id="KW-0067">ATP-binding</keyword>
<keyword id="KW-0173">Coenzyme A biosynthesis</keyword>
<keyword id="KW-0963">Cytoplasm</keyword>
<keyword id="KW-0418">Kinase</keyword>
<keyword id="KW-0547">Nucleotide-binding</keyword>
<keyword id="KW-0808">Transferase</keyword>